<proteinExistence type="inferred from homology"/>
<protein>
    <recommendedName>
        <fullName evidence="1">Large ribosomal subunit protein uL10</fullName>
    </recommendedName>
    <alternativeName>
        <fullName evidence="2">50S ribosomal protein L10</fullName>
    </alternativeName>
</protein>
<organism>
    <name type="scientific">Methylorubrum populi (strain ATCC BAA-705 / NCIMB 13946 / BJ001)</name>
    <name type="common">Methylobacterium populi</name>
    <dbReference type="NCBI Taxonomy" id="441620"/>
    <lineage>
        <taxon>Bacteria</taxon>
        <taxon>Pseudomonadati</taxon>
        <taxon>Pseudomonadota</taxon>
        <taxon>Alphaproteobacteria</taxon>
        <taxon>Hyphomicrobiales</taxon>
        <taxon>Methylobacteriaceae</taxon>
        <taxon>Methylorubrum</taxon>
    </lineage>
</organism>
<reference key="1">
    <citation type="submission" date="2008-04" db="EMBL/GenBank/DDBJ databases">
        <title>Complete sequence of chromosome of Methylobacterium populi BJ001.</title>
        <authorList>
            <consortium name="US DOE Joint Genome Institute"/>
            <person name="Copeland A."/>
            <person name="Lucas S."/>
            <person name="Lapidus A."/>
            <person name="Glavina del Rio T."/>
            <person name="Dalin E."/>
            <person name="Tice H."/>
            <person name="Bruce D."/>
            <person name="Goodwin L."/>
            <person name="Pitluck S."/>
            <person name="Chertkov O."/>
            <person name="Brettin T."/>
            <person name="Detter J.C."/>
            <person name="Han C."/>
            <person name="Kuske C.R."/>
            <person name="Schmutz J."/>
            <person name="Larimer F."/>
            <person name="Land M."/>
            <person name="Hauser L."/>
            <person name="Kyrpides N."/>
            <person name="Mikhailova N."/>
            <person name="Marx C."/>
            <person name="Richardson P."/>
        </authorList>
    </citation>
    <scope>NUCLEOTIDE SEQUENCE [LARGE SCALE GENOMIC DNA]</scope>
    <source>
        <strain>ATCC BAA-705 / NCIMB 13946 / BJ001</strain>
    </source>
</reference>
<name>RL10_METPB</name>
<accession>B1ZGR8</accession>
<comment type="function">
    <text evidence="1">Forms part of the ribosomal stalk, playing a central role in the interaction of the ribosome with GTP-bound translation factors.</text>
</comment>
<comment type="subunit">
    <text evidence="1">Part of the ribosomal stalk of the 50S ribosomal subunit. The N-terminus interacts with L11 and the large rRNA to form the base of the stalk. The C-terminus forms an elongated spine to which L12 dimers bind in a sequential fashion forming a multimeric L10(L12)X complex.</text>
</comment>
<comment type="similarity">
    <text evidence="1">Belongs to the universal ribosomal protein uL10 family.</text>
</comment>
<sequence>MDRTAKADLVSTLNGVFTTNAVVVVAHYKGLTVADMQKLRSQMKQAGATVKVAKNRLASIALDGTDVASIKPLLKGPTLLAYSSDPVAAAKVAVDFAKTNDKLVILGGAMGTTALNPDGVKALATLPSLDELRAKLVGLIQAPATKVAQVVNAPAAKLARVFGAYAKKDEAA</sequence>
<feature type="chain" id="PRO_1000120986" description="Large ribosomal subunit protein uL10">
    <location>
        <begin position="1"/>
        <end position="172"/>
    </location>
</feature>
<gene>
    <name evidence="1" type="primary">rplJ</name>
    <name type="ordered locus">Mpop_4497</name>
</gene>
<dbReference type="EMBL" id="CP001029">
    <property type="protein sequence ID" value="ACB82596.1"/>
    <property type="molecule type" value="Genomic_DNA"/>
</dbReference>
<dbReference type="RefSeq" id="WP_012456200.1">
    <property type="nucleotide sequence ID" value="NC_010725.1"/>
</dbReference>
<dbReference type="SMR" id="B1ZGR8"/>
<dbReference type="STRING" id="441620.Mpop_4497"/>
<dbReference type="KEGG" id="mpo:Mpop_4497"/>
<dbReference type="eggNOG" id="COG0244">
    <property type="taxonomic scope" value="Bacteria"/>
</dbReference>
<dbReference type="HOGENOM" id="CLU_092227_0_0_5"/>
<dbReference type="OrthoDB" id="9791972at2"/>
<dbReference type="Proteomes" id="UP000007136">
    <property type="component" value="Chromosome"/>
</dbReference>
<dbReference type="GO" id="GO:0015934">
    <property type="term" value="C:large ribosomal subunit"/>
    <property type="evidence" value="ECO:0007669"/>
    <property type="project" value="InterPro"/>
</dbReference>
<dbReference type="GO" id="GO:0070180">
    <property type="term" value="F:large ribosomal subunit rRNA binding"/>
    <property type="evidence" value="ECO:0007669"/>
    <property type="project" value="UniProtKB-UniRule"/>
</dbReference>
<dbReference type="GO" id="GO:0003735">
    <property type="term" value="F:structural constituent of ribosome"/>
    <property type="evidence" value="ECO:0007669"/>
    <property type="project" value="InterPro"/>
</dbReference>
<dbReference type="GO" id="GO:0006412">
    <property type="term" value="P:translation"/>
    <property type="evidence" value="ECO:0007669"/>
    <property type="project" value="UniProtKB-UniRule"/>
</dbReference>
<dbReference type="CDD" id="cd05797">
    <property type="entry name" value="Ribosomal_L10"/>
    <property type="match status" value="1"/>
</dbReference>
<dbReference type="Gene3D" id="3.30.70.1730">
    <property type="match status" value="1"/>
</dbReference>
<dbReference type="Gene3D" id="6.10.250.290">
    <property type="match status" value="1"/>
</dbReference>
<dbReference type="HAMAP" id="MF_00362">
    <property type="entry name" value="Ribosomal_uL10"/>
    <property type="match status" value="1"/>
</dbReference>
<dbReference type="InterPro" id="IPR001790">
    <property type="entry name" value="Ribosomal_uL10"/>
</dbReference>
<dbReference type="InterPro" id="IPR043141">
    <property type="entry name" value="Ribosomal_uL10-like_sf"/>
</dbReference>
<dbReference type="InterPro" id="IPR022973">
    <property type="entry name" value="Ribosomal_uL10_bac"/>
</dbReference>
<dbReference type="InterPro" id="IPR047865">
    <property type="entry name" value="Ribosomal_uL10_bac_type"/>
</dbReference>
<dbReference type="InterPro" id="IPR002363">
    <property type="entry name" value="Ribosomal_uL10_CS_bac"/>
</dbReference>
<dbReference type="NCBIfam" id="NF000955">
    <property type="entry name" value="PRK00099.1-1"/>
    <property type="match status" value="1"/>
</dbReference>
<dbReference type="PANTHER" id="PTHR11560">
    <property type="entry name" value="39S RIBOSOMAL PROTEIN L10, MITOCHONDRIAL"/>
    <property type="match status" value="1"/>
</dbReference>
<dbReference type="Pfam" id="PF00466">
    <property type="entry name" value="Ribosomal_L10"/>
    <property type="match status" value="1"/>
</dbReference>
<dbReference type="SUPFAM" id="SSF160369">
    <property type="entry name" value="Ribosomal protein L10-like"/>
    <property type="match status" value="1"/>
</dbReference>
<dbReference type="PROSITE" id="PS01109">
    <property type="entry name" value="RIBOSOMAL_L10"/>
    <property type="match status" value="1"/>
</dbReference>
<keyword id="KW-0687">Ribonucleoprotein</keyword>
<keyword id="KW-0689">Ribosomal protein</keyword>
<keyword id="KW-0694">RNA-binding</keyword>
<keyword id="KW-0699">rRNA-binding</keyword>
<evidence type="ECO:0000255" key="1">
    <source>
        <dbReference type="HAMAP-Rule" id="MF_00362"/>
    </source>
</evidence>
<evidence type="ECO:0000305" key="2"/>